<evidence type="ECO:0000255" key="1">
    <source>
        <dbReference type="HAMAP-Rule" id="MF_00061"/>
    </source>
</evidence>
<organism>
    <name type="scientific">Prochlorococcus marinus (strain MIT 9312)</name>
    <dbReference type="NCBI Taxonomy" id="74546"/>
    <lineage>
        <taxon>Bacteria</taxon>
        <taxon>Bacillati</taxon>
        <taxon>Cyanobacteriota</taxon>
        <taxon>Cyanophyceae</taxon>
        <taxon>Synechococcales</taxon>
        <taxon>Prochlorococcaceae</taxon>
        <taxon>Prochlorococcus</taxon>
    </lineage>
</organism>
<accession>Q31B18</accession>
<keyword id="KW-0067">ATP-binding</keyword>
<keyword id="KW-0414">Isoprene biosynthesis</keyword>
<keyword id="KW-0418">Kinase</keyword>
<keyword id="KW-0547">Nucleotide-binding</keyword>
<keyword id="KW-0808">Transferase</keyword>
<reference key="1">
    <citation type="journal article" date="2006" name="Science">
        <title>Genomic islands and the ecology and evolution of Prochlorococcus.</title>
        <authorList>
            <person name="Coleman M.L."/>
            <person name="Sullivan M.B."/>
            <person name="Martiny A.C."/>
            <person name="Steglich C."/>
            <person name="Barry K."/>
            <person name="Delong E.F."/>
            <person name="Chisholm S.W."/>
        </authorList>
    </citation>
    <scope>NUCLEOTIDE SEQUENCE [LARGE SCALE GENOMIC DNA]</scope>
    <source>
        <strain>MIT 9312</strain>
    </source>
</reference>
<name>ISPE_PROM9</name>
<dbReference type="EC" id="2.7.1.148" evidence="1"/>
<dbReference type="EMBL" id="CP000111">
    <property type="protein sequence ID" value="ABB49927.1"/>
    <property type="molecule type" value="Genomic_DNA"/>
</dbReference>
<dbReference type="RefSeq" id="WP_011376422.1">
    <property type="nucleotide sequence ID" value="NC_007577.1"/>
</dbReference>
<dbReference type="SMR" id="Q31B18"/>
<dbReference type="STRING" id="74546.PMT9312_0867"/>
<dbReference type="KEGG" id="pmi:PMT9312_0867"/>
<dbReference type="eggNOG" id="COG1947">
    <property type="taxonomic scope" value="Bacteria"/>
</dbReference>
<dbReference type="HOGENOM" id="CLU_053057_1_1_3"/>
<dbReference type="OrthoDB" id="9809438at2"/>
<dbReference type="UniPathway" id="UPA00056">
    <property type="reaction ID" value="UER00094"/>
</dbReference>
<dbReference type="Proteomes" id="UP000002715">
    <property type="component" value="Chromosome"/>
</dbReference>
<dbReference type="GO" id="GO:0050515">
    <property type="term" value="F:4-(cytidine 5'-diphospho)-2-C-methyl-D-erythritol kinase activity"/>
    <property type="evidence" value="ECO:0007669"/>
    <property type="project" value="UniProtKB-UniRule"/>
</dbReference>
<dbReference type="GO" id="GO:0005524">
    <property type="term" value="F:ATP binding"/>
    <property type="evidence" value="ECO:0007669"/>
    <property type="project" value="UniProtKB-UniRule"/>
</dbReference>
<dbReference type="GO" id="GO:0019288">
    <property type="term" value="P:isopentenyl diphosphate biosynthetic process, methylerythritol 4-phosphate pathway"/>
    <property type="evidence" value="ECO:0007669"/>
    <property type="project" value="UniProtKB-UniRule"/>
</dbReference>
<dbReference type="GO" id="GO:0016114">
    <property type="term" value="P:terpenoid biosynthetic process"/>
    <property type="evidence" value="ECO:0007669"/>
    <property type="project" value="InterPro"/>
</dbReference>
<dbReference type="Gene3D" id="3.30.230.10">
    <property type="match status" value="1"/>
</dbReference>
<dbReference type="Gene3D" id="3.30.70.890">
    <property type="entry name" value="GHMP kinase, C-terminal domain"/>
    <property type="match status" value="1"/>
</dbReference>
<dbReference type="HAMAP" id="MF_00061">
    <property type="entry name" value="IspE"/>
    <property type="match status" value="1"/>
</dbReference>
<dbReference type="InterPro" id="IPR013750">
    <property type="entry name" value="GHMP_kinase_C_dom"/>
</dbReference>
<dbReference type="InterPro" id="IPR036554">
    <property type="entry name" value="GHMP_kinase_C_sf"/>
</dbReference>
<dbReference type="InterPro" id="IPR006204">
    <property type="entry name" value="GHMP_kinase_N_dom"/>
</dbReference>
<dbReference type="InterPro" id="IPR004424">
    <property type="entry name" value="IspE"/>
</dbReference>
<dbReference type="InterPro" id="IPR020568">
    <property type="entry name" value="Ribosomal_Su5_D2-typ_SF"/>
</dbReference>
<dbReference type="InterPro" id="IPR014721">
    <property type="entry name" value="Ribsml_uS5_D2-typ_fold_subgr"/>
</dbReference>
<dbReference type="NCBIfam" id="TIGR00154">
    <property type="entry name" value="ispE"/>
    <property type="match status" value="1"/>
</dbReference>
<dbReference type="PANTHER" id="PTHR43527">
    <property type="entry name" value="4-DIPHOSPHOCYTIDYL-2-C-METHYL-D-ERYTHRITOL KINASE, CHLOROPLASTIC"/>
    <property type="match status" value="1"/>
</dbReference>
<dbReference type="PANTHER" id="PTHR43527:SF2">
    <property type="entry name" value="4-DIPHOSPHOCYTIDYL-2-C-METHYL-D-ERYTHRITOL KINASE, CHLOROPLASTIC"/>
    <property type="match status" value="1"/>
</dbReference>
<dbReference type="Pfam" id="PF08544">
    <property type="entry name" value="GHMP_kinases_C"/>
    <property type="match status" value="1"/>
</dbReference>
<dbReference type="Pfam" id="PF00288">
    <property type="entry name" value="GHMP_kinases_N"/>
    <property type="match status" value="1"/>
</dbReference>
<dbReference type="PIRSF" id="PIRSF010376">
    <property type="entry name" value="IspE"/>
    <property type="match status" value="1"/>
</dbReference>
<dbReference type="SUPFAM" id="SSF55060">
    <property type="entry name" value="GHMP Kinase, C-terminal domain"/>
    <property type="match status" value="1"/>
</dbReference>
<dbReference type="SUPFAM" id="SSF54211">
    <property type="entry name" value="Ribosomal protein S5 domain 2-like"/>
    <property type="match status" value="1"/>
</dbReference>
<feature type="chain" id="PRO_0000235114" description="4-diphosphocytidyl-2-C-methyl-D-erythritol kinase">
    <location>
        <begin position="1"/>
        <end position="311"/>
    </location>
</feature>
<feature type="active site" evidence="1">
    <location>
        <position position="16"/>
    </location>
</feature>
<feature type="active site" evidence="1">
    <location>
        <position position="142"/>
    </location>
</feature>
<feature type="binding site" evidence="1">
    <location>
        <begin position="100"/>
        <end position="110"/>
    </location>
    <ligand>
        <name>ATP</name>
        <dbReference type="ChEBI" id="CHEBI:30616"/>
    </ligand>
</feature>
<gene>
    <name evidence="1" type="primary">ispE</name>
    <name type="ordered locus">PMT9312_0867</name>
</gene>
<protein>
    <recommendedName>
        <fullName evidence="1">4-diphosphocytidyl-2-C-methyl-D-erythritol kinase</fullName>
        <shortName evidence="1">CMK</shortName>
        <ecNumber evidence="1">2.7.1.148</ecNumber>
    </recommendedName>
    <alternativeName>
        <fullName evidence="1">4-(cytidine-5'-diphospho)-2-C-methyl-D-erythritol kinase</fullName>
    </alternativeName>
</protein>
<proteinExistence type="inferred from homology"/>
<sequence length="311" mass="34839">MQDLAKTKINIKSPAKINLHLEVIGKREDGFHELAMIMQNIDLSDYLEFEINNEGLIKLESDCNDLSLSDDNLIVKSANLLRKKSNIDYGANIFLRKNIPIGAGLAGGSSNSAATLIGLNKLWDLNLGQEALCSLASTLGSDIPFFINGGIQLCFGRGEVLEKLDSNFEYGVILLKNPNVSVSTAETYKKYSNRFCHQYLTDREMIENIRKNLRENGLNNLNLDNQHLSIKNDLQLVVENENDSVKQALYLLSKLENCLTFSMSGSGPTCFALFKDIETAKKELTANYKLFRNKGYDSWVCTFLEKGITFI</sequence>
<comment type="function">
    <text evidence="1">Catalyzes the phosphorylation of the position 2 hydroxy group of 4-diphosphocytidyl-2C-methyl-D-erythritol.</text>
</comment>
<comment type="catalytic activity">
    <reaction evidence="1">
        <text>4-CDP-2-C-methyl-D-erythritol + ATP = 4-CDP-2-C-methyl-D-erythritol 2-phosphate + ADP + H(+)</text>
        <dbReference type="Rhea" id="RHEA:18437"/>
        <dbReference type="ChEBI" id="CHEBI:15378"/>
        <dbReference type="ChEBI" id="CHEBI:30616"/>
        <dbReference type="ChEBI" id="CHEBI:57823"/>
        <dbReference type="ChEBI" id="CHEBI:57919"/>
        <dbReference type="ChEBI" id="CHEBI:456216"/>
        <dbReference type="EC" id="2.7.1.148"/>
    </reaction>
</comment>
<comment type="pathway">
    <text evidence="1">Isoprenoid biosynthesis; isopentenyl diphosphate biosynthesis via DXP pathway; isopentenyl diphosphate from 1-deoxy-D-xylulose 5-phosphate: step 3/6.</text>
</comment>
<comment type="similarity">
    <text evidence="1">Belongs to the GHMP kinase family. IspE subfamily.</text>
</comment>